<gene>
    <name type="primary">ddo-3</name>
    <name type="ORF">F20H11.5</name>
</gene>
<feature type="signal peptide" evidence="2">
    <location>
        <begin position="1"/>
        <end position="17"/>
    </location>
</feature>
<feature type="chain" id="PRO_0000248529" description="D-aspartate oxidase 3">
    <location>
        <begin position="18"/>
        <end position="383"/>
    </location>
</feature>
<feature type="binding site" evidence="1">
    <location>
        <position position="56"/>
    </location>
    <ligand>
        <name>FAD</name>
        <dbReference type="ChEBI" id="CHEBI:57692"/>
    </ligand>
</feature>
<feature type="binding site" evidence="1">
    <location>
        <position position="63"/>
    </location>
    <ligand>
        <name>FAD</name>
        <dbReference type="ChEBI" id="CHEBI:57692"/>
    </ligand>
</feature>
<feature type="binding site" evidence="1">
    <location>
        <position position="339"/>
    </location>
    <ligand>
        <name>FAD</name>
        <dbReference type="ChEBI" id="CHEBI:57692"/>
    </ligand>
</feature>
<feature type="glycosylation site" description="N-linked (GlcNAc...) asparagine" evidence="4">
    <location>
        <position position="152"/>
    </location>
</feature>
<feature type="glycosylation site" description="N-linked (GlcNAc...) asparagine" evidence="3 4">
    <location>
        <position position="271"/>
    </location>
</feature>
<feature type="glycosylation site" description="N-linked (GlcNAc...) asparagine" evidence="2">
    <location>
        <position position="320"/>
    </location>
</feature>
<feature type="glycosylation site" description="N-linked (GlcNAc...) asparagine" evidence="2">
    <location>
        <position position="371"/>
    </location>
</feature>
<keyword id="KW-0274">FAD</keyword>
<keyword id="KW-0285">Flavoprotein</keyword>
<keyword id="KW-0325">Glycoprotein</keyword>
<keyword id="KW-0560">Oxidoreductase</keyword>
<keyword id="KW-1185">Reference proteome</keyword>
<keyword id="KW-0964">Secreted</keyword>
<keyword id="KW-0732">Signal</keyword>
<dbReference type="EC" id="1.4.3.1" evidence="5"/>
<dbReference type="EMBL" id="AB275893">
    <property type="protein sequence ID" value="BAF34316.1"/>
    <property type="molecule type" value="mRNA"/>
</dbReference>
<dbReference type="EMBL" id="FO081189">
    <property type="protein sequence ID" value="CCD69778.1"/>
    <property type="molecule type" value="Genomic_DNA"/>
</dbReference>
<dbReference type="PIR" id="F88486">
    <property type="entry name" value="F88486"/>
</dbReference>
<dbReference type="RefSeq" id="NP_498453.1">
    <property type="nucleotide sequence ID" value="NM_066052.5"/>
</dbReference>
<dbReference type="SMR" id="O01739"/>
<dbReference type="BioGRID" id="49534">
    <property type="interactions" value="4"/>
</dbReference>
<dbReference type="DIP" id="DIP-25818N"/>
<dbReference type="FunCoup" id="O01739">
    <property type="interactions" value="104"/>
</dbReference>
<dbReference type="IntAct" id="O01739">
    <property type="interactions" value="1"/>
</dbReference>
<dbReference type="STRING" id="6239.F20H11.5.1"/>
<dbReference type="BindingDB" id="O01739"/>
<dbReference type="ChEMBL" id="CHEMBL3351211"/>
<dbReference type="GlyCosmos" id="O01739">
    <property type="glycosylation" value="4 sites, No reported glycans"/>
</dbReference>
<dbReference type="iPTMnet" id="O01739"/>
<dbReference type="PaxDb" id="6239-F20H11.5"/>
<dbReference type="PeptideAtlas" id="O01739"/>
<dbReference type="EnsemblMetazoa" id="F20H11.5.1">
    <property type="protein sequence ID" value="F20H11.5.1"/>
    <property type="gene ID" value="WBGene00017648"/>
</dbReference>
<dbReference type="GeneID" id="184746"/>
<dbReference type="KEGG" id="cel:CELE_F20H11.5"/>
<dbReference type="UCSC" id="F20H11.5">
    <property type="organism name" value="c. elegans"/>
</dbReference>
<dbReference type="AGR" id="WB:WBGene00017648"/>
<dbReference type="CTD" id="184746"/>
<dbReference type="WormBase" id="F20H11.5">
    <property type="protein sequence ID" value="CE09514"/>
    <property type="gene ID" value="WBGene00017648"/>
    <property type="gene designation" value="ddo-3"/>
</dbReference>
<dbReference type="eggNOG" id="KOG3923">
    <property type="taxonomic scope" value="Eukaryota"/>
</dbReference>
<dbReference type="GeneTree" id="ENSGT00390000018635"/>
<dbReference type="HOGENOM" id="CLU_034311_0_2_1"/>
<dbReference type="InParanoid" id="O01739"/>
<dbReference type="OMA" id="YKVVHNY"/>
<dbReference type="OrthoDB" id="2015447at2759"/>
<dbReference type="PhylomeDB" id="O01739"/>
<dbReference type="Reactome" id="R-CEL-389661">
    <property type="pathway name" value="Glyoxylate metabolism and glycine degradation"/>
</dbReference>
<dbReference type="Reactome" id="R-CEL-9033241">
    <property type="pathway name" value="Peroxisomal protein import"/>
</dbReference>
<dbReference type="SABIO-RK" id="O01739"/>
<dbReference type="PRO" id="PR:O01739"/>
<dbReference type="Proteomes" id="UP000001940">
    <property type="component" value="Chromosome III"/>
</dbReference>
<dbReference type="Bgee" id="WBGene00017648">
    <property type="expression patterns" value="Expressed in germ line (C elegans) and 2 other cell types or tissues"/>
</dbReference>
<dbReference type="GO" id="GO:0005737">
    <property type="term" value="C:cytoplasm"/>
    <property type="evidence" value="ECO:0000318"/>
    <property type="project" value="GO_Central"/>
</dbReference>
<dbReference type="GO" id="GO:0005576">
    <property type="term" value="C:extracellular region"/>
    <property type="evidence" value="ECO:0000314"/>
    <property type="project" value="UniProtKB"/>
</dbReference>
<dbReference type="GO" id="GO:0003884">
    <property type="term" value="F:D-amino-acid oxidase activity"/>
    <property type="evidence" value="ECO:0000318"/>
    <property type="project" value="GO_Central"/>
</dbReference>
<dbReference type="GO" id="GO:0008445">
    <property type="term" value="F:D-aspartate oxidase activity"/>
    <property type="evidence" value="ECO:0000250"/>
    <property type="project" value="UniProtKB"/>
</dbReference>
<dbReference type="GO" id="GO:0047821">
    <property type="term" value="F:D-glutamate oxidase activity"/>
    <property type="evidence" value="ECO:0007669"/>
    <property type="project" value="RHEA"/>
</dbReference>
<dbReference type="GO" id="GO:0071949">
    <property type="term" value="F:FAD binding"/>
    <property type="evidence" value="ECO:0000250"/>
    <property type="project" value="UniProtKB"/>
</dbReference>
<dbReference type="GO" id="GO:0019478">
    <property type="term" value="P:D-amino acid catabolic process"/>
    <property type="evidence" value="ECO:0000250"/>
    <property type="project" value="UniProtKB"/>
</dbReference>
<dbReference type="Gene3D" id="3.30.9.10">
    <property type="entry name" value="D-Amino Acid Oxidase, subunit A, domain 2"/>
    <property type="match status" value="1"/>
</dbReference>
<dbReference type="Gene3D" id="3.40.50.720">
    <property type="entry name" value="NAD(P)-binding Rossmann-like Domain"/>
    <property type="match status" value="1"/>
</dbReference>
<dbReference type="InterPro" id="IPR006181">
    <property type="entry name" value="D-amino_acid_oxidase_CS"/>
</dbReference>
<dbReference type="InterPro" id="IPR023209">
    <property type="entry name" value="DAO"/>
</dbReference>
<dbReference type="InterPro" id="IPR006076">
    <property type="entry name" value="FAD-dep_OxRdtase"/>
</dbReference>
<dbReference type="PANTHER" id="PTHR11530">
    <property type="entry name" value="D-AMINO ACID OXIDASE"/>
    <property type="match status" value="1"/>
</dbReference>
<dbReference type="PANTHER" id="PTHR11530:SF6">
    <property type="entry name" value="D-ASPARTATE OXIDASE 3"/>
    <property type="match status" value="1"/>
</dbReference>
<dbReference type="Pfam" id="PF01266">
    <property type="entry name" value="DAO"/>
    <property type="match status" value="1"/>
</dbReference>
<dbReference type="SUPFAM" id="SSF54373">
    <property type="entry name" value="FAD-linked reductases, C-terminal domain"/>
    <property type="match status" value="1"/>
</dbReference>
<dbReference type="SUPFAM" id="SSF51971">
    <property type="entry name" value="Nucleotide-binding domain"/>
    <property type="match status" value="1"/>
</dbReference>
<dbReference type="PROSITE" id="PS00677">
    <property type="entry name" value="DAO"/>
    <property type="match status" value="1"/>
</dbReference>
<reference key="1">
    <citation type="journal article" date="2007" name="FEBS J.">
        <title>Caenorhabditis elegans has two genes encoding functional D-aspartate oxidases.</title>
        <authorList>
            <person name="Katane M."/>
            <person name="Seida Y."/>
            <person name="Sekine M."/>
            <person name="Furuchi T."/>
            <person name="Homma H."/>
        </authorList>
    </citation>
    <scope>NUCLEOTIDE SEQUENCE [MRNA]</scope>
    <source>
        <strain>Bristol N2</strain>
    </source>
</reference>
<reference key="2">
    <citation type="journal article" date="1998" name="Science">
        <title>Genome sequence of the nematode C. elegans: a platform for investigating biology.</title>
        <authorList>
            <consortium name="The C. elegans sequencing consortium"/>
        </authorList>
    </citation>
    <scope>NUCLEOTIDE SEQUENCE [LARGE SCALE GENOMIC DNA]</scope>
    <source>
        <strain>Bristol N2</strain>
    </source>
</reference>
<reference key="3">
    <citation type="journal article" date="2003" name="Nat. Biotechnol.">
        <title>Lectin affinity capture, isotope-coded tagging and mass spectrometry to identify N-linked glycoproteins.</title>
        <authorList>
            <person name="Kaji H."/>
            <person name="Saito H."/>
            <person name="Yamauchi Y."/>
            <person name="Shinkawa T."/>
            <person name="Taoka M."/>
            <person name="Hirabayashi J."/>
            <person name="Kasai K."/>
            <person name="Takahashi N."/>
            <person name="Isobe T."/>
        </authorList>
    </citation>
    <scope>GLYCOSYLATION [LARGE SCALE ANALYSIS] AT ASN-271</scope>
    <scope>IDENTIFICATION BY MASS SPECTROMETRY</scope>
    <source>
        <strain>Bristol N2</strain>
    </source>
</reference>
<reference key="4">
    <citation type="journal article" date="2007" name="Mol. Cell. Proteomics">
        <title>Proteomics reveals N-linked glycoprotein diversity in Caenorhabditis elegans and suggests an atypical translocation mechanism for integral membrane proteins.</title>
        <authorList>
            <person name="Kaji H."/>
            <person name="Kamiie J."/>
            <person name="Kawakami H."/>
            <person name="Kido K."/>
            <person name="Yamauchi Y."/>
            <person name="Shinkawa T."/>
            <person name="Taoka M."/>
            <person name="Takahashi N."/>
            <person name="Isobe T."/>
        </authorList>
    </citation>
    <scope>GLYCOSYLATION [LARGE SCALE ANALYSIS] AT ASN-152 AND ASN-271</scope>
    <scope>IDENTIFICATION BY MASS SPECTROMETRY</scope>
    <source>
        <strain>Bristol N2</strain>
    </source>
</reference>
<reference key="5">
    <citation type="journal article" date="2010" name="Chem. Biodivers.">
        <title>Comparative characterization of three D-aspartate oxidases and one D-amino acid oxidase from Caenorhabditis elegans.</title>
        <authorList>
            <person name="Katane M."/>
            <person name="Saitoh Y."/>
            <person name="Seida Y."/>
            <person name="Sekine M."/>
            <person name="Furuchi T."/>
            <person name="Homma H."/>
        </authorList>
    </citation>
    <scope>FUNCTION</scope>
    <scope>CATALYTIC ACTIVITY</scope>
    <scope>SUBSTRATE SPECIFICITY</scope>
    <scope>STEREOSPECIFICITY</scope>
    <scope>COFACTOR</scope>
    <scope>BIOPHYSICOCHEMICAL PROPERTIES</scope>
</reference>
<reference key="6">
    <citation type="journal article" date="2012" name="Mol. Cell. Biol.">
        <title>Spatiotemporal localization of D-amino acid oxidase and D-aspartate oxidases during development in Caenorhabditis elegans.</title>
        <authorList>
            <person name="Saitoh Y."/>
            <person name="Katane M."/>
            <person name="Kawata T."/>
            <person name="Maeda K."/>
            <person name="Sekine M."/>
            <person name="Furuchi T."/>
            <person name="Kobuna H."/>
            <person name="Sakamoto T."/>
            <person name="Inoue T."/>
            <person name="Arai H."/>
            <person name="Nakagawa Y."/>
            <person name="Homma H."/>
        </authorList>
    </citation>
    <scope>FUNCTION</scope>
    <scope>TISSUE SPECIFICITY</scope>
    <scope>DEVELOPMENTAL STAGE</scope>
    <scope>DISRUPTION PHENOTYPE</scope>
    <source>
        <strain>Bristol N2</strain>
    </source>
</reference>
<reference key="7">
    <citation type="journal article" date="2019" name="FEBS J.">
        <title>Secreted d-aspartate oxidase functions in C. elegans reproduction and development.</title>
        <authorList>
            <person name="Saitoh Y."/>
            <person name="Katane M."/>
            <person name="Miyamoto T."/>
            <person name="Sekine M."/>
            <person name="Sakamoto T."/>
            <person name="Imai H."/>
            <person name="Homma H."/>
        </authorList>
    </citation>
    <scope>FUNCTION</scope>
    <scope>SUBCELLULAR LOCATION</scope>
    <scope>TISSUE SPECIFICITY</scope>
    <scope>DEVELOPMENTAL STAGE</scope>
</reference>
<sequence>MLYALLLLFGGVSTVSSLRVAVVGEGVIGLSTATAILDLAEKRNIPAPEIHIFHHKPFEKILSRHIAGLFRIDSGSEIDRKYGYDTFEKLATLWREYGGLSGVQLVSGHILSDSKTKLDSQRESYGSLVYNYRDLAEPELFGPTSLFDLPRNTTTRGIHYTAYTSEGLRFCPFLKKELMTKGVRFTQRRIGNLEELGAEFDVVVNSAGLLGGVLAGDDAGNMKPIRGVLIRVDAPWQKHFLYRDFSTITIPVIDHVYMGTVKQEGAFGPNNVTSADIQDITSRYVALQPSFKRVHMLSSFVGYRPGRKQVRVEKQIRETNGSKKFTVVHNYGHSGNGFTLGYGSAVHAAHIVLDLPLDAYHGLVPEPLPINATISEWVKYLDD</sequence>
<evidence type="ECO:0000250" key="1">
    <source>
        <dbReference type="UniProtKB" id="Q99489"/>
    </source>
</evidence>
<evidence type="ECO:0000255" key="2"/>
<evidence type="ECO:0000269" key="3">
    <source>
    </source>
</evidence>
<evidence type="ECO:0000269" key="4">
    <source>
    </source>
</evidence>
<evidence type="ECO:0000269" key="5">
    <source>
    </source>
</evidence>
<evidence type="ECO:0000269" key="6">
    <source>
    </source>
</evidence>
<evidence type="ECO:0000269" key="7">
    <source>
    </source>
</evidence>
<evidence type="ECO:0000305" key="8"/>
<proteinExistence type="evidence at protein level"/>
<protein>
    <recommendedName>
        <fullName>D-aspartate oxidase 3</fullName>
        <shortName>DASOX 3</shortName>
        <shortName evidence="8">DASPO 3</shortName>
        <shortName>DDO-3</shortName>
        <ecNumber evidence="5">1.4.3.1</ecNumber>
    </recommendedName>
</protein>
<accession>O01739</accession>
<accession>Q08I98</accession>
<organism>
    <name type="scientific">Caenorhabditis elegans</name>
    <dbReference type="NCBI Taxonomy" id="6239"/>
    <lineage>
        <taxon>Eukaryota</taxon>
        <taxon>Metazoa</taxon>
        <taxon>Ecdysozoa</taxon>
        <taxon>Nematoda</taxon>
        <taxon>Chromadorea</taxon>
        <taxon>Rhabditida</taxon>
        <taxon>Rhabditina</taxon>
        <taxon>Rhabditomorpha</taxon>
        <taxon>Rhabditoidea</taxon>
        <taxon>Rhabditidae</taxon>
        <taxon>Peloderinae</taxon>
        <taxon>Caenorhabditis</taxon>
    </lineage>
</organism>
<comment type="function">
    <text evidence="5 6 7">Selectively catalyzes the oxidative deamination of acidic amino acids (PubMed:20564561). Plays a role in the egg-laying events and maturation processes of the reproductive organs (PubMed:22393259, PubMed:30387556).</text>
</comment>
<comment type="catalytic activity">
    <reaction evidence="5">
        <text>D-aspartate + O2 + H2O = oxaloacetate + H2O2 + NH4(+)</text>
        <dbReference type="Rhea" id="RHEA:12512"/>
        <dbReference type="ChEBI" id="CHEBI:15377"/>
        <dbReference type="ChEBI" id="CHEBI:15379"/>
        <dbReference type="ChEBI" id="CHEBI:16240"/>
        <dbReference type="ChEBI" id="CHEBI:16452"/>
        <dbReference type="ChEBI" id="CHEBI:28938"/>
        <dbReference type="ChEBI" id="CHEBI:29990"/>
        <dbReference type="EC" id="1.4.3.1"/>
    </reaction>
    <physiologicalReaction direction="left-to-right" evidence="5">
        <dbReference type="Rhea" id="RHEA:12513"/>
    </physiologicalReaction>
</comment>
<comment type="catalytic activity">
    <reaction evidence="5">
        <text>D-glutamate + O2 + H2O = H2O2 + 2-oxoglutarate + NH4(+)</text>
        <dbReference type="Rhea" id="RHEA:10028"/>
        <dbReference type="ChEBI" id="CHEBI:15377"/>
        <dbReference type="ChEBI" id="CHEBI:15379"/>
        <dbReference type="ChEBI" id="CHEBI:16240"/>
        <dbReference type="ChEBI" id="CHEBI:16810"/>
        <dbReference type="ChEBI" id="CHEBI:28938"/>
        <dbReference type="ChEBI" id="CHEBI:29986"/>
    </reaction>
    <physiologicalReaction direction="left-to-right" evidence="5">
        <dbReference type="Rhea" id="RHEA:10029"/>
    </physiologicalReaction>
</comment>
<comment type="cofactor">
    <cofactor evidence="5">
        <name>FAD</name>
        <dbReference type="ChEBI" id="CHEBI:57692"/>
    </cofactor>
</comment>
<comment type="biophysicochemical properties">
    <kinetics>
        <KM evidence="5">3.81 mM for D-aspartate</KM>
        <KM evidence="5">0.68 mM for D-glutamate</KM>
        <KM evidence="5">8.87 mM for N-methyl D-aspartate</KM>
        <text evidence="5">The values given are for the recombinant protein.</text>
    </kinetics>
</comment>
<comment type="subcellular location">
    <subcellularLocation>
        <location evidence="7">Secreted</location>
    </subcellularLocation>
    <text evidence="7">In hermaphrodites, protein secreted from proximal gonadal sheath cells may be transferred to the oocyte surface (PubMed:30387556). In males, protein secreted from the seminal vesicle into the seminal fluid is transferred to the hermaphrodite uterus during mating (PubMed:30387556).</text>
</comment>
<comment type="tissue specificity">
    <text evidence="6 7">In both sexes, present in coelomocytes (at protein level) (PubMed:30387556). Expressed in hypodermal cells and the proximal gonadal sheath cells in adult hermaphrodites (at protein level) (PubMed:22393259, PubMed:30387556). Also expressed in probable head mesodermal cells and unidentified cells in the head, and vulval muscles in adult hermaphrodites (PubMed:22393259). Expressed in the seminal vesicle, spicule and tail cells in adult males (at protein level) (PubMed:22393259, PubMed:30387556).</text>
</comment>
<comment type="developmental stage">
    <text evidence="6 7">Expressed in excretory pore cells from the late embryonic stage (at protein level) (PubMed:30387556). Expression in head mesodermal cells detected from L3 stage to adult stages (at protein level) (PubMed:22393259, PubMed:30387556). Expressed in vulval muscles from L4 stage to adult stages (at protein level) (PubMed:22393259, PubMed:30387556). In males, expressed in seminal vesicle cells from L4 stage (at protein level) (PubMed:30387556).</text>
</comment>
<comment type="disruption phenotype">
    <text evidence="6 7">Mutant worms have high D-Glu content at both egg and young adult stages and a high L-Trp level at young adult stage but do not show any change in physical appearance (PubMed:22393259). They also have decreased egg-laying capacity at 20 degrees Celsius, and decreased hatching rate and smaller brood size at 25 degrees Celsius (PubMed:22393259, PubMed:30387556). Mutant worms also show delay in growth to adulthood and an extended life span (PubMed:22393259, PubMed:30387556). Impairs the nose-touch response (PubMed:30387556). Does not decrease male fertility (PubMed:30387556).</text>
</comment>
<comment type="similarity">
    <text evidence="8">Belongs to the DAMOX/DASOX family.</text>
</comment>
<name>OXDD3_CAEEL</name>